<gene>
    <name type="ORF">zgc:56556</name>
</gene>
<reference key="1">
    <citation type="submission" date="2003-05" db="EMBL/GenBank/DDBJ databases">
        <authorList>
            <consortium name="NIH - Zebrafish Gene Collection (ZGC) project"/>
        </authorList>
    </citation>
    <scope>NUCLEOTIDE SEQUENCE [LARGE SCALE MRNA]</scope>
</reference>
<keyword id="KW-1185">Reference proteome</keyword>
<dbReference type="EMBL" id="BC052751">
    <property type="protein sequence ID" value="AAH52751.1"/>
    <property type="molecule type" value="mRNA"/>
</dbReference>
<dbReference type="RefSeq" id="NP_956625.1">
    <property type="nucleotide sequence ID" value="NM_200331.1"/>
</dbReference>
<dbReference type="SMR" id="Q7SZF1"/>
<dbReference type="FunCoup" id="Q7SZF1">
    <property type="interactions" value="834"/>
</dbReference>
<dbReference type="STRING" id="7955.ENSDARP00000004506"/>
<dbReference type="PaxDb" id="7955-ENSDARP00000004506"/>
<dbReference type="GeneID" id="393302"/>
<dbReference type="KEGG" id="dre:393302"/>
<dbReference type="AGR" id="ZFIN:ZDB-GENE-040426-1078"/>
<dbReference type="ZFIN" id="ZDB-GENE-040426-1078">
    <property type="gene designation" value="zgc:56556"/>
</dbReference>
<dbReference type="eggNOG" id="ENOG502QW2U">
    <property type="taxonomic scope" value="Eukaryota"/>
</dbReference>
<dbReference type="InParanoid" id="Q7SZF1"/>
<dbReference type="OrthoDB" id="418142at2759"/>
<dbReference type="PhylomeDB" id="Q7SZF1"/>
<dbReference type="PRO" id="PR:Q7SZF1"/>
<dbReference type="Proteomes" id="UP000000437">
    <property type="component" value="Chromosome 2"/>
</dbReference>
<dbReference type="InterPro" id="IPR024131">
    <property type="entry name" value="UPF0489"/>
</dbReference>
<dbReference type="PANTHER" id="PTHR13225">
    <property type="entry name" value="MISEXPRESSION SUPPRESSOR OF RAS 6"/>
    <property type="match status" value="1"/>
</dbReference>
<dbReference type="PANTHER" id="PTHR13225:SF3">
    <property type="entry name" value="UPF0489 PROTEIN C5ORF22"/>
    <property type="match status" value="1"/>
</dbReference>
<dbReference type="Pfam" id="PF12640">
    <property type="entry name" value="UPF0489"/>
    <property type="match status" value="1"/>
</dbReference>
<proteinExistence type="evidence at transcript level"/>
<organism>
    <name type="scientific">Danio rerio</name>
    <name type="common">Zebrafish</name>
    <name type="synonym">Brachydanio rerio</name>
    <dbReference type="NCBI Taxonomy" id="7955"/>
    <lineage>
        <taxon>Eukaryota</taxon>
        <taxon>Metazoa</taxon>
        <taxon>Chordata</taxon>
        <taxon>Craniata</taxon>
        <taxon>Vertebrata</taxon>
        <taxon>Euteleostomi</taxon>
        <taxon>Actinopterygii</taxon>
        <taxon>Neopterygii</taxon>
        <taxon>Teleostei</taxon>
        <taxon>Ostariophysi</taxon>
        <taxon>Cypriniformes</taxon>
        <taxon>Danionidae</taxon>
        <taxon>Danioninae</taxon>
        <taxon>Danio</taxon>
    </lineage>
</organism>
<name>CE022_DANRE</name>
<feature type="chain" id="PRO_0000305005" description="UPF0489 protein C5orf22 homolog">
    <location>
        <begin position="1"/>
        <end position="439"/>
    </location>
</feature>
<feature type="region of interest" description="Disordered" evidence="1">
    <location>
        <begin position="163"/>
        <end position="219"/>
    </location>
</feature>
<feature type="compositionally biased region" description="Polar residues" evidence="1">
    <location>
        <begin position="179"/>
        <end position="211"/>
    </location>
</feature>
<comment type="similarity">
    <text evidence="2">Belongs to the UPF0489 family.</text>
</comment>
<sequence>MNAPPQKRVYPKLPVWIVEDHHEVVQHIYRAIGSRHIPMKGIKMVHLDSHPDLLIPVNMPADTVYDKETLLRELSIENWIMPMVYAGHVSHVAWLHPYWAQQIREGQHCMCVGKDSSTTTIRVTSKDDYFLSDALYVPLDHLEHPKELHLHVIRVDPVVSSQTTKLENGQSGAKIPKAAQTQDDMQSKADTPCTSSSQPPDGSAASGNISETAKKKADDGSTSYITDKLLAVIEQTDPFILDIDLDFFSCKNPFKDMFSQEEFTLLKELYSFSKPQQDPDEEELLECVERRTRQLEDLEAAFADLLEDDGQETVERLAANPGMKSLFRLVHSLKNRPSPPDYEMVHQAGLTCDNSELPHHISSDEEIQQMITAVQLFLETLPKPTIVTISRSSLDEYCPAEQVDSIQIRVLDILESLFGCLDVHRDYESIPAESTSHTA</sequence>
<protein>
    <recommendedName>
        <fullName>UPF0489 protein C5orf22 homolog</fullName>
    </recommendedName>
</protein>
<evidence type="ECO:0000256" key="1">
    <source>
        <dbReference type="SAM" id="MobiDB-lite"/>
    </source>
</evidence>
<evidence type="ECO:0000305" key="2"/>
<accession>Q7SZF1</accession>